<proteinExistence type="inferred from homology"/>
<keyword id="KW-1185">Reference proteome</keyword>
<keyword id="KW-0687">Ribonucleoprotein</keyword>
<keyword id="KW-0689">Ribosomal protein</keyword>
<keyword id="KW-0694">RNA-binding</keyword>
<keyword id="KW-0699">rRNA-binding</keyword>
<evidence type="ECO:0000255" key="1">
    <source>
        <dbReference type="HAMAP-Rule" id="MF_01365"/>
    </source>
</evidence>
<evidence type="ECO:0000305" key="2"/>
<gene>
    <name evidence="1" type="primary">rplF</name>
    <name type="ordered locus">Sbal_4155</name>
</gene>
<organism>
    <name type="scientific">Shewanella baltica (strain OS155 / ATCC BAA-1091)</name>
    <dbReference type="NCBI Taxonomy" id="325240"/>
    <lineage>
        <taxon>Bacteria</taxon>
        <taxon>Pseudomonadati</taxon>
        <taxon>Pseudomonadota</taxon>
        <taxon>Gammaproteobacteria</taxon>
        <taxon>Alteromonadales</taxon>
        <taxon>Shewanellaceae</taxon>
        <taxon>Shewanella</taxon>
    </lineage>
</organism>
<comment type="function">
    <text evidence="1">This protein binds to the 23S rRNA, and is important in its secondary structure. It is located near the subunit interface in the base of the L7/L12 stalk, and near the tRNA binding site of the peptidyltransferase center.</text>
</comment>
<comment type="subunit">
    <text evidence="1">Part of the 50S ribosomal subunit.</text>
</comment>
<comment type="similarity">
    <text evidence="1">Belongs to the universal ribosomal protein uL6 family.</text>
</comment>
<dbReference type="EMBL" id="CP000563">
    <property type="protein sequence ID" value="ABN63620.1"/>
    <property type="molecule type" value="Genomic_DNA"/>
</dbReference>
<dbReference type="RefSeq" id="WP_006083585.1">
    <property type="nucleotide sequence ID" value="NC_009052.1"/>
</dbReference>
<dbReference type="SMR" id="A3DA57"/>
<dbReference type="STRING" id="325240.Sbal_4155"/>
<dbReference type="GeneID" id="11774510"/>
<dbReference type="KEGG" id="sbl:Sbal_4155"/>
<dbReference type="HOGENOM" id="CLU_065464_1_2_6"/>
<dbReference type="OrthoDB" id="9805007at2"/>
<dbReference type="Proteomes" id="UP000001557">
    <property type="component" value="Chromosome"/>
</dbReference>
<dbReference type="GO" id="GO:0022625">
    <property type="term" value="C:cytosolic large ribosomal subunit"/>
    <property type="evidence" value="ECO:0007669"/>
    <property type="project" value="TreeGrafter"/>
</dbReference>
<dbReference type="GO" id="GO:0019843">
    <property type="term" value="F:rRNA binding"/>
    <property type="evidence" value="ECO:0007669"/>
    <property type="project" value="UniProtKB-UniRule"/>
</dbReference>
<dbReference type="GO" id="GO:0003735">
    <property type="term" value="F:structural constituent of ribosome"/>
    <property type="evidence" value="ECO:0007669"/>
    <property type="project" value="InterPro"/>
</dbReference>
<dbReference type="GO" id="GO:0002181">
    <property type="term" value="P:cytoplasmic translation"/>
    <property type="evidence" value="ECO:0007669"/>
    <property type="project" value="TreeGrafter"/>
</dbReference>
<dbReference type="FunFam" id="3.90.930.12:FF:000001">
    <property type="entry name" value="50S ribosomal protein L6"/>
    <property type="match status" value="1"/>
</dbReference>
<dbReference type="FunFam" id="3.90.930.12:FF:000002">
    <property type="entry name" value="50S ribosomal protein L6"/>
    <property type="match status" value="1"/>
</dbReference>
<dbReference type="Gene3D" id="3.90.930.12">
    <property type="entry name" value="Ribosomal protein L6, alpha-beta domain"/>
    <property type="match status" value="2"/>
</dbReference>
<dbReference type="HAMAP" id="MF_01365_B">
    <property type="entry name" value="Ribosomal_uL6_B"/>
    <property type="match status" value="1"/>
</dbReference>
<dbReference type="InterPro" id="IPR000702">
    <property type="entry name" value="Ribosomal_uL6-like"/>
</dbReference>
<dbReference type="InterPro" id="IPR036789">
    <property type="entry name" value="Ribosomal_uL6-like_a/b-dom_sf"/>
</dbReference>
<dbReference type="InterPro" id="IPR020040">
    <property type="entry name" value="Ribosomal_uL6_a/b-dom"/>
</dbReference>
<dbReference type="InterPro" id="IPR019906">
    <property type="entry name" value="Ribosomal_uL6_bac-type"/>
</dbReference>
<dbReference type="InterPro" id="IPR002358">
    <property type="entry name" value="Ribosomal_uL6_CS"/>
</dbReference>
<dbReference type="NCBIfam" id="TIGR03654">
    <property type="entry name" value="L6_bact"/>
    <property type="match status" value="1"/>
</dbReference>
<dbReference type="PANTHER" id="PTHR11655">
    <property type="entry name" value="60S/50S RIBOSOMAL PROTEIN L6/L9"/>
    <property type="match status" value="1"/>
</dbReference>
<dbReference type="PANTHER" id="PTHR11655:SF14">
    <property type="entry name" value="LARGE RIBOSOMAL SUBUNIT PROTEIN UL6M"/>
    <property type="match status" value="1"/>
</dbReference>
<dbReference type="Pfam" id="PF00347">
    <property type="entry name" value="Ribosomal_L6"/>
    <property type="match status" value="2"/>
</dbReference>
<dbReference type="PIRSF" id="PIRSF002162">
    <property type="entry name" value="Ribosomal_L6"/>
    <property type="match status" value="1"/>
</dbReference>
<dbReference type="PRINTS" id="PR00059">
    <property type="entry name" value="RIBOSOMALL6"/>
</dbReference>
<dbReference type="SUPFAM" id="SSF56053">
    <property type="entry name" value="Ribosomal protein L6"/>
    <property type="match status" value="2"/>
</dbReference>
<dbReference type="PROSITE" id="PS00525">
    <property type="entry name" value="RIBOSOMAL_L6_1"/>
    <property type="match status" value="1"/>
</dbReference>
<feature type="chain" id="PRO_1000055303" description="Large ribosomal subunit protein uL6">
    <location>
        <begin position="1"/>
        <end position="177"/>
    </location>
</feature>
<name>RL6_SHEB5</name>
<protein>
    <recommendedName>
        <fullName evidence="1">Large ribosomal subunit protein uL6</fullName>
    </recommendedName>
    <alternativeName>
        <fullName evidence="2">50S ribosomal protein L6</fullName>
    </alternativeName>
</protein>
<accession>A3DA57</accession>
<reference key="1">
    <citation type="submission" date="2007-02" db="EMBL/GenBank/DDBJ databases">
        <title>Complete sequence of chromosome of Shewanella baltica OS155.</title>
        <authorList>
            <consortium name="US DOE Joint Genome Institute"/>
            <person name="Copeland A."/>
            <person name="Lucas S."/>
            <person name="Lapidus A."/>
            <person name="Barry K."/>
            <person name="Detter J.C."/>
            <person name="Glavina del Rio T."/>
            <person name="Hammon N."/>
            <person name="Israni S."/>
            <person name="Dalin E."/>
            <person name="Tice H."/>
            <person name="Pitluck S."/>
            <person name="Sims D.R."/>
            <person name="Brettin T."/>
            <person name="Bruce D."/>
            <person name="Han C."/>
            <person name="Tapia R."/>
            <person name="Brainard J."/>
            <person name="Schmutz J."/>
            <person name="Larimer F."/>
            <person name="Land M."/>
            <person name="Hauser L."/>
            <person name="Kyrpides N."/>
            <person name="Mikhailova N."/>
            <person name="Brettar I."/>
            <person name="Klappenbach J."/>
            <person name="Konstantinidis K."/>
            <person name="Rodrigues J."/>
            <person name="Tiedje J."/>
            <person name="Richardson P."/>
        </authorList>
    </citation>
    <scope>NUCLEOTIDE SEQUENCE [LARGE SCALE GENOMIC DNA]</scope>
    <source>
        <strain>OS155 / ATCC BAA-1091</strain>
    </source>
</reference>
<sequence>MSRVAKAPVSIPAGVEVTLNEQTLTVKGGKGSLTRVINNAVNVVIEAGVVKFLPVEGVSNAWAQAGTTRALVNNMVVGVSQGFERKLKLVGVGYRAKLVGSDIDLTLGFSHPLVHKLPAGVTAECPSQTDIVLRGVDKQLIGQVAAEIRGYRPPEPYKGKGVRYDDEVVRRKEAKKK</sequence>